<feature type="chain" id="PRO_0000118777" description="NADH-quinone oxidoreductase subunit B">
    <location>
        <begin position="1"/>
        <end position="177"/>
    </location>
</feature>
<feature type="binding site" evidence="1">
    <location>
        <position position="56"/>
    </location>
    <ligand>
        <name>[4Fe-4S] cluster</name>
        <dbReference type="ChEBI" id="CHEBI:49883"/>
    </ligand>
</feature>
<feature type="binding site" evidence="1">
    <location>
        <position position="57"/>
    </location>
    <ligand>
        <name>[4Fe-4S] cluster</name>
        <dbReference type="ChEBI" id="CHEBI:49883"/>
    </ligand>
</feature>
<feature type="binding site" evidence="1">
    <location>
        <position position="121"/>
    </location>
    <ligand>
        <name>[4Fe-4S] cluster</name>
        <dbReference type="ChEBI" id="CHEBI:49883"/>
    </ligand>
</feature>
<feature type="binding site" evidence="1">
    <location>
        <position position="151"/>
    </location>
    <ligand>
        <name>[4Fe-4S] cluster</name>
        <dbReference type="ChEBI" id="CHEBI:49883"/>
    </ligand>
</feature>
<proteinExistence type="inferred from homology"/>
<name>NUOB_RHOCA</name>
<keyword id="KW-0004">4Fe-4S</keyword>
<keyword id="KW-0997">Cell inner membrane</keyword>
<keyword id="KW-1003">Cell membrane</keyword>
<keyword id="KW-0408">Iron</keyword>
<keyword id="KW-0411">Iron-sulfur</keyword>
<keyword id="KW-0472">Membrane</keyword>
<keyword id="KW-0479">Metal-binding</keyword>
<keyword id="KW-0520">NAD</keyword>
<keyword id="KW-0874">Quinone</keyword>
<keyword id="KW-1278">Translocase</keyword>
<keyword id="KW-0813">Transport</keyword>
<keyword id="KW-0830">Ubiquinone</keyword>
<accession>O84970</accession>
<reference key="1">
    <citation type="submission" date="1997-10" db="EMBL/GenBank/DDBJ databases">
        <authorList>
            <person name="Dupuis A."/>
            <person name="Issartel J.P."/>
        </authorList>
    </citation>
    <scope>NUCLEOTIDE SEQUENCE [GENOMIC DNA]</scope>
    <source>
        <strain>ATCC 33303 / B10</strain>
    </source>
</reference>
<sequence length="177" mass="19509">MGVMTGSNTAAVDMDVAAAALNRDLQDKGFLLTTAEDIINWARNGSLHWMTFGLACCAVEMMHTAMPRYDVERYGFAPRASPRQSDVMIVAGTLTNKMAPALRKVYDQMPEPRYVISMGSCANGGGYYHYSYSVVRGCDRIVPVDIYVPGCPPSAEALMYGILQLQRKIRRTGTLVR</sequence>
<protein>
    <recommendedName>
        <fullName evidence="1">NADH-quinone oxidoreductase subunit B</fullName>
        <ecNumber evidence="1">7.1.1.-</ecNumber>
    </recommendedName>
    <alternativeName>
        <fullName evidence="1">NADH dehydrogenase I subunit B</fullName>
    </alternativeName>
    <alternativeName>
        <fullName evidence="1">NDH-1 subunit B</fullName>
    </alternativeName>
</protein>
<organism>
    <name type="scientific">Rhodobacter capsulatus</name>
    <name type="common">Rhodopseudomonas capsulata</name>
    <dbReference type="NCBI Taxonomy" id="1061"/>
    <lineage>
        <taxon>Bacteria</taxon>
        <taxon>Pseudomonadati</taxon>
        <taxon>Pseudomonadota</taxon>
        <taxon>Alphaproteobacteria</taxon>
        <taxon>Rhodobacterales</taxon>
        <taxon>Rhodobacter group</taxon>
        <taxon>Rhodobacter</taxon>
    </lineage>
</organism>
<gene>
    <name evidence="1" type="primary">nuoB</name>
</gene>
<evidence type="ECO:0000255" key="1">
    <source>
        <dbReference type="HAMAP-Rule" id="MF_01356"/>
    </source>
</evidence>
<dbReference type="EC" id="7.1.1.-" evidence="1"/>
<dbReference type="EMBL" id="AF029365">
    <property type="protein sequence ID" value="AAC24986.1"/>
    <property type="molecule type" value="Genomic_DNA"/>
</dbReference>
<dbReference type="RefSeq" id="WP_013067242.1">
    <property type="nucleotide sequence ID" value="NZ_VIBE01000008.1"/>
</dbReference>
<dbReference type="SMR" id="O84970"/>
<dbReference type="OMA" id="MCAGTIT"/>
<dbReference type="GO" id="GO:0005886">
    <property type="term" value="C:plasma membrane"/>
    <property type="evidence" value="ECO:0007669"/>
    <property type="project" value="UniProtKB-SubCell"/>
</dbReference>
<dbReference type="GO" id="GO:0045271">
    <property type="term" value="C:respiratory chain complex I"/>
    <property type="evidence" value="ECO:0007669"/>
    <property type="project" value="TreeGrafter"/>
</dbReference>
<dbReference type="GO" id="GO:0051539">
    <property type="term" value="F:4 iron, 4 sulfur cluster binding"/>
    <property type="evidence" value="ECO:0007669"/>
    <property type="project" value="UniProtKB-KW"/>
</dbReference>
<dbReference type="GO" id="GO:0005506">
    <property type="term" value="F:iron ion binding"/>
    <property type="evidence" value="ECO:0007669"/>
    <property type="project" value="UniProtKB-UniRule"/>
</dbReference>
<dbReference type="GO" id="GO:0008137">
    <property type="term" value="F:NADH dehydrogenase (ubiquinone) activity"/>
    <property type="evidence" value="ECO:0007669"/>
    <property type="project" value="InterPro"/>
</dbReference>
<dbReference type="GO" id="GO:0050136">
    <property type="term" value="F:NADH:ubiquinone reductase (non-electrogenic) activity"/>
    <property type="evidence" value="ECO:0007669"/>
    <property type="project" value="UniProtKB-UniRule"/>
</dbReference>
<dbReference type="GO" id="GO:0048038">
    <property type="term" value="F:quinone binding"/>
    <property type="evidence" value="ECO:0007669"/>
    <property type="project" value="UniProtKB-KW"/>
</dbReference>
<dbReference type="GO" id="GO:0009060">
    <property type="term" value="P:aerobic respiration"/>
    <property type="evidence" value="ECO:0007669"/>
    <property type="project" value="TreeGrafter"/>
</dbReference>
<dbReference type="GO" id="GO:0015990">
    <property type="term" value="P:electron transport coupled proton transport"/>
    <property type="evidence" value="ECO:0007669"/>
    <property type="project" value="TreeGrafter"/>
</dbReference>
<dbReference type="FunFam" id="3.40.50.12280:FF:000001">
    <property type="entry name" value="NADH-quinone oxidoreductase subunit B 2"/>
    <property type="match status" value="1"/>
</dbReference>
<dbReference type="Gene3D" id="3.40.50.12280">
    <property type="match status" value="1"/>
</dbReference>
<dbReference type="HAMAP" id="MF_01356">
    <property type="entry name" value="NDH1_NuoB"/>
    <property type="match status" value="1"/>
</dbReference>
<dbReference type="InterPro" id="IPR006137">
    <property type="entry name" value="NADH_UbQ_OxRdtase-like_20kDa"/>
</dbReference>
<dbReference type="InterPro" id="IPR006138">
    <property type="entry name" value="NADH_UQ_OxRdtase_20Kd_su"/>
</dbReference>
<dbReference type="NCBIfam" id="TIGR01957">
    <property type="entry name" value="nuoB_fam"/>
    <property type="match status" value="1"/>
</dbReference>
<dbReference type="NCBIfam" id="NF005012">
    <property type="entry name" value="PRK06411.1"/>
    <property type="match status" value="1"/>
</dbReference>
<dbReference type="PANTHER" id="PTHR11995">
    <property type="entry name" value="NADH DEHYDROGENASE"/>
    <property type="match status" value="1"/>
</dbReference>
<dbReference type="PANTHER" id="PTHR11995:SF14">
    <property type="entry name" value="NADH DEHYDROGENASE [UBIQUINONE] IRON-SULFUR PROTEIN 7, MITOCHONDRIAL"/>
    <property type="match status" value="1"/>
</dbReference>
<dbReference type="Pfam" id="PF01058">
    <property type="entry name" value="Oxidored_q6"/>
    <property type="match status" value="1"/>
</dbReference>
<dbReference type="SUPFAM" id="SSF56770">
    <property type="entry name" value="HydA/Nqo6-like"/>
    <property type="match status" value="1"/>
</dbReference>
<dbReference type="PROSITE" id="PS01150">
    <property type="entry name" value="COMPLEX1_20K"/>
    <property type="match status" value="1"/>
</dbReference>
<comment type="function">
    <text>NDH-1 shuttles electrons from NADH, via FMN and iron-sulfur (Fe-S) centers, to quinones in the respiratory chain. The immediate electron acceptor for the enzyme in this species is believed to be ubiquinone. Couples the redox reaction to proton translocation (for every two electrons transferred, four hydrogen ions are translocated across the cytoplasmic membrane), and thus conserves the redox energy in a proton gradient.</text>
</comment>
<comment type="catalytic activity">
    <reaction evidence="1">
        <text>a quinone + NADH + 5 H(+)(in) = a quinol + NAD(+) + 4 H(+)(out)</text>
        <dbReference type="Rhea" id="RHEA:57888"/>
        <dbReference type="ChEBI" id="CHEBI:15378"/>
        <dbReference type="ChEBI" id="CHEBI:24646"/>
        <dbReference type="ChEBI" id="CHEBI:57540"/>
        <dbReference type="ChEBI" id="CHEBI:57945"/>
        <dbReference type="ChEBI" id="CHEBI:132124"/>
    </reaction>
</comment>
<comment type="cofactor">
    <cofactor evidence="1">
        <name>[4Fe-4S] cluster</name>
        <dbReference type="ChEBI" id="CHEBI:49883"/>
    </cofactor>
    <text evidence="1">Binds 1 [4Fe-4S] cluster.</text>
</comment>
<comment type="subunit">
    <text evidence="1">NDH-1 is composed of 14 different subunits. Subunits NuoB, C, D, E, F, and G constitute the peripheral sector of the complex.</text>
</comment>
<comment type="subcellular location">
    <subcellularLocation>
        <location evidence="1">Cell inner membrane</location>
        <topology evidence="1">Peripheral membrane protein</topology>
        <orientation evidence="1">Cytoplasmic side</orientation>
    </subcellularLocation>
</comment>
<comment type="similarity">
    <text evidence="1">Belongs to the complex I 20 kDa subunit family.</text>
</comment>